<accession>P75152</accession>
<reference key="1">
    <citation type="journal article" date="1996" name="Nucleic Acids Res.">
        <title>Complete sequence analysis of the genome of the bacterium Mycoplasma pneumoniae.</title>
        <authorList>
            <person name="Himmelreich R."/>
            <person name="Hilbert H."/>
            <person name="Plagens H."/>
            <person name="Pirkl E."/>
            <person name="Li B.-C."/>
            <person name="Herrmann R."/>
        </authorList>
    </citation>
    <scope>NUCLEOTIDE SEQUENCE [LARGE SCALE GENOMIC DNA]</scope>
    <source>
        <strain>ATCC 29342 / M129 / Subtype 1</strain>
    </source>
</reference>
<dbReference type="EMBL" id="U00089">
    <property type="protein sequence ID" value="AAB95845.1"/>
    <property type="molecule type" value="Genomic_DNA"/>
</dbReference>
<dbReference type="PIR" id="S73523">
    <property type="entry name" value="S73523"/>
</dbReference>
<dbReference type="RefSeq" id="NP_110334.1">
    <property type="nucleotide sequence ID" value="NC_000912.1"/>
</dbReference>
<dbReference type="RefSeq" id="WP_010875002.1">
    <property type="nucleotide sequence ID" value="NZ_OU342337.1"/>
</dbReference>
<dbReference type="IntAct" id="P75152">
    <property type="interactions" value="1"/>
</dbReference>
<dbReference type="STRING" id="272634.MPN_645"/>
<dbReference type="EnsemblBacteria" id="AAB95845">
    <property type="protein sequence ID" value="AAB95845"/>
    <property type="gene ID" value="MPN_645"/>
</dbReference>
<dbReference type="KEGG" id="mpn:MPN_645"/>
<dbReference type="PATRIC" id="fig|272634.6.peg.708"/>
<dbReference type="HOGENOM" id="CLU_080699_0_0_14"/>
<dbReference type="OrthoDB" id="403129at2"/>
<dbReference type="BioCyc" id="MPNE272634:G1GJ3-1030-MONOMER"/>
<dbReference type="Proteomes" id="UP000000808">
    <property type="component" value="Chromosome"/>
</dbReference>
<dbReference type="GO" id="GO:0005886">
    <property type="term" value="C:plasma membrane"/>
    <property type="evidence" value="ECO:0007669"/>
    <property type="project" value="UniProtKB-SubCell"/>
</dbReference>
<dbReference type="InterPro" id="IPR001595">
    <property type="entry name" value="Lipoprotein_3"/>
</dbReference>
<dbReference type="Pfam" id="PF00938">
    <property type="entry name" value="Lipoprotein_3"/>
    <property type="match status" value="1"/>
</dbReference>
<dbReference type="PROSITE" id="PS51257">
    <property type="entry name" value="PROKAR_LIPOPROTEIN"/>
    <property type="match status" value="1"/>
</dbReference>
<organism>
    <name type="scientific">Mycoplasma pneumoniae (strain ATCC 29342 / M129 / Subtype 1)</name>
    <name type="common">Mycoplasmoides pneumoniae</name>
    <dbReference type="NCBI Taxonomy" id="272634"/>
    <lineage>
        <taxon>Bacteria</taxon>
        <taxon>Bacillati</taxon>
        <taxon>Mycoplasmatota</taxon>
        <taxon>Mycoplasmoidales</taxon>
        <taxon>Mycoplasmoidaceae</taxon>
        <taxon>Mycoplasmoides</taxon>
    </lineage>
</organism>
<sequence length="283" mass="31355">MKLKLKFLLISLLGSSLLLSACSSAATQVISSLSSAQKYFESSQGELNKKNVIKILKEGYESDANKAVHALLAGWKYTLMDQQLLSKEVDSRFIKAFGSGRDKGDVTPSVSEKGLYLNETYTGFSSQIAKVLGVQSQTVKQFNYKWSSNSDFKVQIQISMKGKVGSDSESQQLIKSFLSSDNNGSNQNGGVKETDFNGDSANFDGFFTFTYTPPTQSRKFGATSFDPLTTKINFPADLQIDVSTTHQKLNTLMEANEQVKQIKSRKFTGKTFDLLPFFYYALL</sequence>
<name>Y645_MYCPN</name>
<feature type="signal peptide" evidence="1">
    <location>
        <begin position="1"/>
        <end position="21"/>
    </location>
</feature>
<feature type="chain" id="PRO_0000014044" description="Uncharacterized lipoprotein MG439 homolog 2">
    <location>
        <begin position="22"/>
        <end position="283"/>
    </location>
</feature>
<feature type="lipid moiety-binding region" description="N-palmitoyl cysteine" evidence="1">
    <location>
        <position position="22"/>
    </location>
</feature>
<feature type="lipid moiety-binding region" description="S-diacylglycerol cysteine" evidence="1">
    <location>
        <position position="22"/>
    </location>
</feature>
<protein>
    <recommendedName>
        <fullName>Uncharacterized lipoprotein MG439 homolog 2</fullName>
    </recommendedName>
</protein>
<evidence type="ECO:0000255" key="1">
    <source>
        <dbReference type="PROSITE-ProRule" id="PRU00303"/>
    </source>
</evidence>
<evidence type="ECO:0000305" key="2"/>
<comment type="subcellular location">
    <subcellularLocation>
        <location evidence="1">Cell membrane</location>
        <topology evidence="1">Lipid-anchor</topology>
    </subcellularLocation>
</comment>
<comment type="similarity">
    <text evidence="2">Belongs to the MG439/MG440 family.</text>
</comment>
<gene>
    <name type="ordered locus">MPN_645</name>
    <name type="ORF">E09_orf290</name>
    <name type="ORF">MP197</name>
</gene>
<keyword id="KW-1003">Cell membrane</keyword>
<keyword id="KW-0449">Lipoprotein</keyword>
<keyword id="KW-0472">Membrane</keyword>
<keyword id="KW-0564">Palmitate</keyword>
<keyword id="KW-1185">Reference proteome</keyword>
<keyword id="KW-0732">Signal</keyword>
<proteinExistence type="inferred from homology"/>